<proteinExistence type="inferred from homology"/>
<dbReference type="EC" id="2.7.4.3" evidence="1"/>
<dbReference type="EMBL" id="AP006861">
    <property type="protein sequence ID" value="BAE81246.1"/>
    <property type="molecule type" value="Genomic_DNA"/>
</dbReference>
<dbReference type="RefSeq" id="WP_011458026.1">
    <property type="nucleotide sequence ID" value="NC_007899.1"/>
</dbReference>
<dbReference type="SMR" id="Q254P2"/>
<dbReference type="STRING" id="264202.CF0474"/>
<dbReference type="KEGG" id="cfe:CF0474"/>
<dbReference type="eggNOG" id="COG0563">
    <property type="taxonomic scope" value="Bacteria"/>
</dbReference>
<dbReference type="HOGENOM" id="CLU_032354_1_2_0"/>
<dbReference type="OrthoDB" id="9805030at2"/>
<dbReference type="UniPathway" id="UPA00588">
    <property type="reaction ID" value="UER00649"/>
</dbReference>
<dbReference type="Proteomes" id="UP000001260">
    <property type="component" value="Chromosome"/>
</dbReference>
<dbReference type="GO" id="GO:0005737">
    <property type="term" value="C:cytoplasm"/>
    <property type="evidence" value="ECO:0007669"/>
    <property type="project" value="UniProtKB-SubCell"/>
</dbReference>
<dbReference type="GO" id="GO:0004017">
    <property type="term" value="F:adenylate kinase activity"/>
    <property type="evidence" value="ECO:0007669"/>
    <property type="project" value="UniProtKB-UniRule"/>
</dbReference>
<dbReference type="GO" id="GO:0005524">
    <property type="term" value="F:ATP binding"/>
    <property type="evidence" value="ECO:0007669"/>
    <property type="project" value="UniProtKB-UniRule"/>
</dbReference>
<dbReference type="GO" id="GO:0008270">
    <property type="term" value="F:zinc ion binding"/>
    <property type="evidence" value="ECO:0007669"/>
    <property type="project" value="UniProtKB-UniRule"/>
</dbReference>
<dbReference type="GO" id="GO:0044209">
    <property type="term" value="P:AMP salvage"/>
    <property type="evidence" value="ECO:0007669"/>
    <property type="project" value="UniProtKB-UniRule"/>
</dbReference>
<dbReference type="CDD" id="cd01428">
    <property type="entry name" value="ADK"/>
    <property type="match status" value="1"/>
</dbReference>
<dbReference type="Gene3D" id="3.40.50.300">
    <property type="entry name" value="P-loop containing nucleotide triphosphate hydrolases"/>
    <property type="match status" value="1"/>
</dbReference>
<dbReference type="HAMAP" id="MF_00235">
    <property type="entry name" value="Adenylate_kinase_Adk"/>
    <property type="match status" value="1"/>
</dbReference>
<dbReference type="InterPro" id="IPR006259">
    <property type="entry name" value="Adenyl_kin_sub"/>
</dbReference>
<dbReference type="InterPro" id="IPR000850">
    <property type="entry name" value="Adenylat/UMP-CMP_kin"/>
</dbReference>
<dbReference type="InterPro" id="IPR033690">
    <property type="entry name" value="Adenylat_kinase_CS"/>
</dbReference>
<dbReference type="InterPro" id="IPR027417">
    <property type="entry name" value="P-loop_NTPase"/>
</dbReference>
<dbReference type="NCBIfam" id="TIGR01351">
    <property type="entry name" value="adk"/>
    <property type="match status" value="1"/>
</dbReference>
<dbReference type="NCBIfam" id="NF001381">
    <property type="entry name" value="PRK00279.1-3"/>
    <property type="match status" value="1"/>
</dbReference>
<dbReference type="NCBIfam" id="NF001385">
    <property type="entry name" value="PRK00279.2-3"/>
    <property type="match status" value="1"/>
</dbReference>
<dbReference type="PANTHER" id="PTHR23359">
    <property type="entry name" value="NUCLEOTIDE KINASE"/>
    <property type="match status" value="1"/>
</dbReference>
<dbReference type="Pfam" id="PF00406">
    <property type="entry name" value="ADK"/>
    <property type="match status" value="1"/>
</dbReference>
<dbReference type="PRINTS" id="PR00094">
    <property type="entry name" value="ADENYLTKNASE"/>
</dbReference>
<dbReference type="SUPFAM" id="SSF52540">
    <property type="entry name" value="P-loop containing nucleoside triphosphate hydrolases"/>
    <property type="match status" value="1"/>
</dbReference>
<dbReference type="SUPFAM" id="SSF57802">
    <property type="entry name" value="Rubredoxin-like"/>
    <property type="match status" value="1"/>
</dbReference>
<dbReference type="PROSITE" id="PS00113">
    <property type="entry name" value="ADENYLATE_KINASE"/>
    <property type="match status" value="1"/>
</dbReference>
<feature type="chain" id="PRO_1000021716" description="Adenylate kinase">
    <location>
        <begin position="1"/>
        <end position="213"/>
    </location>
</feature>
<feature type="region of interest" description="NMP" evidence="1">
    <location>
        <begin position="34"/>
        <end position="63"/>
    </location>
</feature>
<feature type="region of interest" description="LID" evidence="1">
    <location>
        <begin position="129"/>
        <end position="162"/>
    </location>
</feature>
<feature type="binding site" evidence="1">
    <location>
        <begin position="14"/>
        <end position="19"/>
    </location>
    <ligand>
        <name>ATP</name>
        <dbReference type="ChEBI" id="CHEBI:30616"/>
    </ligand>
</feature>
<feature type="binding site" evidence="1">
    <location>
        <position position="35"/>
    </location>
    <ligand>
        <name>AMP</name>
        <dbReference type="ChEBI" id="CHEBI:456215"/>
    </ligand>
</feature>
<feature type="binding site" evidence="1">
    <location>
        <position position="40"/>
    </location>
    <ligand>
        <name>AMP</name>
        <dbReference type="ChEBI" id="CHEBI:456215"/>
    </ligand>
</feature>
<feature type="binding site" evidence="1">
    <location>
        <begin position="61"/>
        <end position="63"/>
    </location>
    <ligand>
        <name>AMP</name>
        <dbReference type="ChEBI" id="CHEBI:456215"/>
    </ligand>
</feature>
<feature type="binding site" evidence="1">
    <location>
        <begin position="89"/>
        <end position="92"/>
    </location>
    <ligand>
        <name>AMP</name>
        <dbReference type="ChEBI" id="CHEBI:456215"/>
    </ligand>
</feature>
<feature type="binding site" evidence="1">
    <location>
        <position position="96"/>
    </location>
    <ligand>
        <name>AMP</name>
        <dbReference type="ChEBI" id="CHEBI:456215"/>
    </ligand>
</feature>
<feature type="binding site" evidence="1">
    <location>
        <position position="130"/>
    </location>
    <ligand>
        <name>ATP</name>
        <dbReference type="ChEBI" id="CHEBI:30616"/>
    </ligand>
</feature>
<feature type="binding site" evidence="1">
    <location>
        <position position="133"/>
    </location>
    <ligand>
        <name>Zn(2+)</name>
        <dbReference type="ChEBI" id="CHEBI:29105"/>
        <note>structural</note>
    </ligand>
</feature>
<feature type="binding site" evidence="1">
    <location>
        <position position="136"/>
    </location>
    <ligand>
        <name>Zn(2+)</name>
        <dbReference type="ChEBI" id="CHEBI:29105"/>
        <note>structural</note>
    </ligand>
</feature>
<feature type="binding site" evidence="1">
    <location>
        <begin position="139"/>
        <end position="140"/>
    </location>
    <ligand>
        <name>ATP</name>
        <dbReference type="ChEBI" id="CHEBI:30616"/>
    </ligand>
</feature>
<feature type="binding site" evidence="1">
    <location>
        <position position="149"/>
    </location>
    <ligand>
        <name>Zn(2+)</name>
        <dbReference type="ChEBI" id="CHEBI:29105"/>
        <note>structural</note>
    </ligand>
</feature>
<feature type="binding site" evidence="1">
    <location>
        <position position="152"/>
    </location>
    <ligand>
        <name>Zn(2+)</name>
        <dbReference type="ChEBI" id="CHEBI:29105"/>
        <note>structural</note>
    </ligand>
</feature>
<feature type="binding site" evidence="1">
    <location>
        <position position="159"/>
    </location>
    <ligand>
        <name>AMP</name>
        <dbReference type="ChEBI" id="CHEBI:456215"/>
    </ligand>
</feature>
<feature type="binding site" evidence="1">
    <location>
        <position position="170"/>
    </location>
    <ligand>
        <name>AMP</name>
        <dbReference type="ChEBI" id="CHEBI:456215"/>
    </ligand>
</feature>
<feature type="binding site" evidence="1">
    <location>
        <position position="198"/>
    </location>
    <ligand>
        <name>ATP</name>
        <dbReference type="ChEBI" id="CHEBI:30616"/>
    </ligand>
</feature>
<accession>Q254P2</accession>
<name>KAD_CHLFF</name>
<protein>
    <recommendedName>
        <fullName evidence="1">Adenylate kinase</fullName>
        <shortName evidence="1">AK</shortName>
        <ecNumber evidence="1">2.7.4.3</ecNumber>
    </recommendedName>
    <alternativeName>
        <fullName evidence="1">ATP-AMP transphosphorylase</fullName>
    </alternativeName>
    <alternativeName>
        <fullName evidence="1">ATP:AMP phosphotransferase</fullName>
    </alternativeName>
    <alternativeName>
        <fullName evidence="1">Adenylate monophosphate kinase</fullName>
    </alternativeName>
</protein>
<keyword id="KW-0067">ATP-binding</keyword>
<keyword id="KW-0963">Cytoplasm</keyword>
<keyword id="KW-0418">Kinase</keyword>
<keyword id="KW-0479">Metal-binding</keyword>
<keyword id="KW-0545">Nucleotide biosynthesis</keyword>
<keyword id="KW-0547">Nucleotide-binding</keyword>
<keyword id="KW-0808">Transferase</keyword>
<keyword id="KW-0862">Zinc</keyword>
<evidence type="ECO:0000255" key="1">
    <source>
        <dbReference type="HAMAP-Rule" id="MF_00235"/>
    </source>
</evidence>
<comment type="function">
    <text evidence="1">Catalyzes the reversible transfer of the terminal phosphate group between ATP and AMP. Plays an important role in cellular energy homeostasis and in adenine nucleotide metabolism.</text>
</comment>
<comment type="catalytic activity">
    <reaction evidence="1">
        <text>AMP + ATP = 2 ADP</text>
        <dbReference type="Rhea" id="RHEA:12973"/>
        <dbReference type="ChEBI" id="CHEBI:30616"/>
        <dbReference type="ChEBI" id="CHEBI:456215"/>
        <dbReference type="ChEBI" id="CHEBI:456216"/>
        <dbReference type="EC" id="2.7.4.3"/>
    </reaction>
</comment>
<comment type="pathway">
    <text evidence="1">Purine metabolism; AMP biosynthesis via salvage pathway; AMP from ADP: step 1/1.</text>
</comment>
<comment type="subunit">
    <text evidence="1">Monomer.</text>
</comment>
<comment type="subcellular location">
    <subcellularLocation>
        <location evidence="1">Cytoplasm</location>
    </subcellularLocation>
</comment>
<comment type="domain">
    <text evidence="1">Consists of three domains, a large central CORE domain and two small peripheral domains, NMPbind and LID, which undergo movements during catalysis. The LID domain closes over the site of phosphoryl transfer upon ATP binding. Assembling and dissambling the active center during each catalytic cycle provides an effective means to prevent ATP hydrolysis. Some bacteria have evolved a zinc-coordinating structure that stabilizes the LID domain.</text>
</comment>
<comment type="similarity">
    <text evidence="1">Belongs to the adenylate kinase family.</text>
</comment>
<organism>
    <name type="scientific">Chlamydia felis (strain Fe/C-56)</name>
    <name type="common">Chlamydophila felis</name>
    <dbReference type="NCBI Taxonomy" id="264202"/>
    <lineage>
        <taxon>Bacteria</taxon>
        <taxon>Pseudomonadati</taxon>
        <taxon>Chlamydiota</taxon>
        <taxon>Chlamydiia</taxon>
        <taxon>Chlamydiales</taxon>
        <taxon>Chlamydiaceae</taxon>
        <taxon>Chlamydia/Chlamydophila group</taxon>
        <taxon>Chlamydia</taxon>
    </lineage>
</organism>
<sequence>MLKNIFYIIMGPPGSGKGTQSQCLAEKLGLPHISSGNLLRSAIKASTPLGIKASEYIDEGQLVPNGLVWEIVQETLNKSECLSGCIIDGFPRTLDQAVLLHDFLVKANADYRVIQLDVADEEIIRRIYSRFICPSCNFVYNQSQGFRECPTCHSELVRRSDDTLEVIQKRLESYKNTTASVIDYYADLGKLTCVPAEKSPDEVFQSILACIED</sequence>
<gene>
    <name evidence="1" type="primary">adk</name>
    <name type="ordered locus">CF0474</name>
</gene>
<reference key="1">
    <citation type="journal article" date="2006" name="DNA Res.">
        <title>Genome sequence of the cat pathogen, Chlamydophila felis.</title>
        <authorList>
            <person name="Azuma Y."/>
            <person name="Hirakawa H."/>
            <person name="Yamashita A."/>
            <person name="Cai Y."/>
            <person name="Rahman M.A."/>
            <person name="Suzuki H."/>
            <person name="Mitaku S."/>
            <person name="Toh H."/>
            <person name="Goto S."/>
            <person name="Murakami T."/>
            <person name="Sugi K."/>
            <person name="Hayashi H."/>
            <person name="Fukushi H."/>
            <person name="Hattori M."/>
            <person name="Kuhara S."/>
            <person name="Shirai M."/>
        </authorList>
    </citation>
    <scope>NUCLEOTIDE SEQUENCE [LARGE SCALE GENOMIC DNA]</scope>
    <source>
        <strain>Fe/C-56</strain>
    </source>
</reference>